<protein>
    <recommendedName>
        <fullName>Probable histone H2A.7</fullName>
    </recommendedName>
</protein>
<feature type="chain" id="PRO_0000296125" description="Probable histone H2A.7">
    <location>
        <begin position="1"/>
        <end position="135"/>
    </location>
</feature>
<name>H2A7_ORYSI</name>
<accession>A2ZK29</accession>
<keyword id="KW-0158">Chromosome</keyword>
<keyword id="KW-0238">DNA-binding</keyword>
<keyword id="KW-0544">Nucleosome core</keyword>
<keyword id="KW-0539">Nucleus</keyword>
<keyword id="KW-1185">Reference proteome</keyword>
<evidence type="ECO:0000250" key="1"/>
<evidence type="ECO:0000305" key="2"/>
<dbReference type="EMBL" id="CM000137">
    <property type="protein sequence ID" value="EAY82963.1"/>
    <property type="molecule type" value="Genomic_DNA"/>
</dbReference>
<dbReference type="SMR" id="A2ZK29"/>
<dbReference type="STRING" id="39946.A2ZK29"/>
<dbReference type="EnsemblPlants" id="BGIOSGA036270-TA">
    <property type="protein sequence ID" value="BGIOSGA036270-PA"/>
    <property type="gene ID" value="BGIOSGA036270"/>
</dbReference>
<dbReference type="EnsemblPlants" id="OsGoSa_12g0011550.01">
    <property type="protein sequence ID" value="OsGoSa_12g0011550.01"/>
    <property type="gene ID" value="OsGoSa_12g0011550"/>
</dbReference>
<dbReference type="EnsemblPlants" id="OsIR64_12g0011480.01">
    <property type="protein sequence ID" value="OsIR64_12g0011480.01"/>
    <property type="gene ID" value="OsIR64_12g0011480"/>
</dbReference>
<dbReference type="EnsemblPlants" id="OsKYG_12g0011600.01">
    <property type="protein sequence ID" value="OsKYG_12g0011600.01"/>
    <property type="gene ID" value="OsKYG_12g0011600"/>
</dbReference>
<dbReference type="EnsemblPlants" id="OsLaMu_12g0011660.01">
    <property type="protein sequence ID" value="OsLaMu_12g0011660.01"/>
    <property type="gene ID" value="OsLaMu_12g0011660"/>
</dbReference>
<dbReference type="EnsemblPlants" id="OsLiXu_12g0011520.01">
    <property type="protein sequence ID" value="OsLiXu_12g0011520.01"/>
    <property type="gene ID" value="OsLiXu_12g0011520"/>
</dbReference>
<dbReference type="EnsemblPlants" id="OsMH63_12G011580_01">
    <property type="protein sequence ID" value="OsMH63_12G011580_01"/>
    <property type="gene ID" value="OsMH63_12G011580"/>
</dbReference>
<dbReference type="EnsemblPlants" id="OsPr106_12g0011240.01">
    <property type="protein sequence ID" value="OsPr106_12g0011240.01"/>
    <property type="gene ID" value="OsPr106_12g0011240"/>
</dbReference>
<dbReference type="EnsemblPlants" id="OsZS97_12G011370_01">
    <property type="protein sequence ID" value="OsZS97_12G011370_01"/>
    <property type="gene ID" value="OsZS97_12G011370"/>
</dbReference>
<dbReference type="Gramene" id="BGIOSGA036270-TA">
    <property type="protein sequence ID" value="BGIOSGA036270-PA"/>
    <property type="gene ID" value="BGIOSGA036270"/>
</dbReference>
<dbReference type="Gramene" id="OsGoSa_12g0011550.01">
    <property type="protein sequence ID" value="OsGoSa_12g0011550.01"/>
    <property type="gene ID" value="OsGoSa_12g0011550"/>
</dbReference>
<dbReference type="Gramene" id="OsIR64_12g0011480.01">
    <property type="protein sequence ID" value="OsIR64_12g0011480.01"/>
    <property type="gene ID" value="OsIR64_12g0011480"/>
</dbReference>
<dbReference type="Gramene" id="OsKYG_12g0011600.01">
    <property type="protein sequence ID" value="OsKYG_12g0011600.01"/>
    <property type="gene ID" value="OsKYG_12g0011600"/>
</dbReference>
<dbReference type="Gramene" id="OsLaMu_12g0011660.01">
    <property type="protein sequence ID" value="OsLaMu_12g0011660.01"/>
    <property type="gene ID" value="OsLaMu_12g0011660"/>
</dbReference>
<dbReference type="Gramene" id="OsLiXu_12g0011520.01">
    <property type="protein sequence ID" value="OsLiXu_12g0011520.01"/>
    <property type="gene ID" value="OsLiXu_12g0011520"/>
</dbReference>
<dbReference type="Gramene" id="OsMH63_12G011580_01">
    <property type="protein sequence ID" value="OsMH63_12G011580_01"/>
    <property type="gene ID" value="OsMH63_12G011580"/>
</dbReference>
<dbReference type="Gramene" id="OsPr106_12g0011240.01">
    <property type="protein sequence ID" value="OsPr106_12g0011240.01"/>
    <property type="gene ID" value="OsPr106_12g0011240"/>
</dbReference>
<dbReference type="Gramene" id="OsZS97_12G011370_01">
    <property type="protein sequence ID" value="OsZS97_12G011370_01"/>
    <property type="gene ID" value="OsZS97_12G011370"/>
</dbReference>
<dbReference type="HOGENOM" id="CLU_062828_3_0_1"/>
<dbReference type="OMA" id="HSMIANQ"/>
<dbReference type="OrthoDB" id="9421954at2759"/>
<dbReference type="Proteomes" id="UP000007015">
    <property type="component" value="Chromosome 12"/>
</dbReference>
<dbReference type="GO" id="GO:0000786">
    <property type="term" value="C:nucleosome"/>
    <property type="evidence" value="ECO:0007669"/>
    <property type="project" value="UniProtKB-KW"/>
</dbReference>
<dbReference type="GO" id="GO:0005634">
    <property type="term" value="C:nucleus"/>
    <property type="evidence" value="ECO:0007669"/>
    <property type="project" value="UniProtKB-SubCell"/>
</dbReference>
<dbReference type="GO" id="GO:0003677">
    <property type="term" value="F:DNA binding"/>
    <property type="evidence" value="ECO:0007669"/>
    <property type="project" value="UniProtKB-KW"/>
</dbReference>
<dbReference type="GO" id="GO:0046982">
    <property type="term" value="F:protein heterodimerization activity"/>
    <property type="evidence" value="ECO:0007669"/>
    <property type="project" value="InterPro"/>
</dbReference>
<dbReference type="GO" id="GO:0030527">
    <property type="term" value="F:structural constituent of chromatin"/>
    <property type="evidence" value="ECO:0007669"/>
    <property type="project" value="InterPro"/>
</dbReference>
<dbReference type="CDD" id="cd00074">
    <property type="entry name" value="HFD_H2A"/>
    <property type="match status" value="1"/>
</dbReference>
<dbReference type="FunFam" id="1.10.20.10:FF:000009">
    <property type="entry name" value="Histone H2A"/>
    <property type="match status" value="1"/>
</dbReference>
<dbReference type="Gene3D" id="1.10.20.10">
    <property type="entry name" value="Histone, subunit A"/>
    <property type="match status" value="1"/>
</dbReference>
<dbReference type="InterPro" id="IPR009072">
    <property type="entry name" value="Histone-fold"/>
</dbReference>
<dbReference type="InterPro" id="IPR002119">
    <property type="entry name" value="Histone_H2A"/>
</dbReference>
<dbReference type="InterPro" id="IPR007125">
    <property type="entry name" value="Histone_H2A/H2B/H3"/>
</dbReference>
<dbReference type="InterPro" id="IPR032454">
    <property type="entry name" value="Histone_H2A_C"/>
</dbReference>
<dbReference type="InterPro" id="IPR032458">
    <property type="entry name" value="Histone_H2A_CS"/>
</dbReference>
<dbReference type="PANTHER" id="PTHR23430">
    <property type="entry name" value="HISTONE H2A"/>
    <property type="match status" value="1"/>
</dbReference>
<dbReference type="Pfam" id="PF00125">
    <property type="entry name" value="Histone"/>
    <property type="match status" value="1"/>
</dbReference>
<dbReference type="Pfam" id="PF16211">
    <property type="entry name" value="Histone_H2A_C"/>
    <property type="match status" value="1"/>
</dbReference>
<dbReference type="PRINTS" id="PR00620">
    <property type="entry name" value="HISTONEH2A"/>
</dbReference>
<dbReference type="SMART" id="SM00414">
    <property type="entry name" value="H2A"/>
    <property type="match status" value="1"/>
</dbReference>
<dbReference type="SUPFAM" id="SSF47113">
    <property type="entry name" value="Histone-fold"/>
    <property type="match status" value="1"/>
</dbReference>
<dbReference type="PROSITE" id="PS00046">
    <property type="entry name" value="HISTONE_H2A"/>
    <property type="match status" value="1"/>
</dbReference>
<proteinExistence type="inferred from homology"/>
<organism>
    <name type="scientific">Oryza sativa subsp. indica</name>
    <name type="common">Rice</name>
    <dbReference type="NCBI Taxonomy" id="39946"/>
    <lineage>
        <taxon>Eukaryota</taxon>
        <taxon>Viridiplantae</taxon>
        <taxon>Streptophyta</taxon>
        <taxon>Embryophyta</taxon>
        <taxon>Tracheophyta</taxon>
        <taxon>Spermatophyta</taxon>
        <taxon>Magnoliopsida</taxon>
        <taxon>Liliopsida</taxon>
        <taxon>Poales</taxon>
        <taxon>Poaceae</taxon>
        <taxon>BOP clade</taxon>
        <taxon>Oryzoideae</taxon>
        <taxon>Oryzeae</taxon>
        <taxon>Oryzinae</taxon>
        <taxon>Oryza</taxon>
        <taxon>Oryza sativa</taxon>
    </lineage>
</organism>
<gene>
    <name type="ORF">OsI_036922</name>
</gene>
<sequence>MAGRGKAIGAGAAKKATSRSSKAGLQFPVGRIARFLKAGKYAERVGAGAPVYLAAVLEYLAAEVLELAGNAARDNKKTRIVPRHIQLAVRNDEELTKLLGGATIASGGVMPNIHQHLLPKKAGSSKASHADDDDN</sequence>
<comment type="function">
    <text>Core component of nucleosome. Nucleosomes wrap and compact DNA into chromatin, limiting DNA accessibility to the cellular machineries which require DNA as a template. Histones thereby play a central role in transcription regulation, DNA repair, DNA replication and chromosomal stability. DNA accessibility is regulated via a complex set of post-translational modifications of histones, also called histone code, and nucleosome remodeling.</text>
</comment>
<comment type="subunit">
    <text>The nucleosome is a histone octamer containing two molecules each of H2A, H2B, H3 and H4 assembled in one H3-H4 heterotetramer and two H2A-H2B heterodimers. The octamer wraps approximately 147 bp of DNA.</text>
</comment>
<comment type="subcellular location">
    <subcellularLocation>
        <location evidence="1">Nucleus</location>
    </subcellularLocation>
    <subcellularLocation>
        <location evidence="1">Chromosome</location>
    </subcellularLocation>
</comment>
<comment type="similarity">
    <text evidence="2">Belongs to the histone H2A family.</text>
</comment>
<reference key="1">
    <citation type="journal article" date="2005" name="PLoS Biol.">
        <title>The genomes of Oryza sativa: a history of duplications.</title>
        <authorList>
            <person name="Yu J."/>
            <person name="Wang J."/>
            <person name="Lin W."/>
            <person name="Li S."/>
            <person name="Li H."/>
            <person name="Zhou J."/>
            <person name="Ni P."/>
            <person name="Dong W."/>
            <person name="Hu S."/>
            <person name="Zeng C."/>
            <person name="Zhang J."/>
            <person name="Zhang Y."/>
            <person name="Li R."/>
            <person name="Xu Z."/>
            <person name="Li S."/>
            <person name="Li X."/>
            <person name="Zheng H."/>
            <person name="Cong L."/>
            <person name="Lin L."/>
            <person name="Yin J."/>
            <person name="Geng J."/>
            <person name="Li G."/>
            <person name="Shi J."/>
            <person name="Liu J."/>
            <person name="Lv H."/>
            <person name="Li J."/>
            <person name="Wang J."/>
            <person name="Deng Y."/>
            <person name="Ran L."/>
            <person name="Shi X."/>
            <person name="Wang X."/>
            <person name="Wu Q."/>
            <person name="Li C."/>
            <person name="Ren X."/>
            <person name="Wang J."/>
            <person name="Wang X."/>
            <person name="Li D."/>
            <person name="Liu D."/>
            <person name="Zhang X."/>
            <person name="Ji Z."/>
            <person name="Zhao W."/>
            <person name="Sun Y."/>
            <person name="Zhang Z."/>
            <person name="Bao J."/>
            <person name="Han Y."/>
            <person name="Dong L."/>
            <person name="Ji J."/>
            <person name="Chen P."/>
            <person name="Wu S."/>
            <person name="Liu J."/>
            <person name="Xiao Y."/>
            <person name="Bu D."/>
            <person name="Tan J."/>
            <person name="Yang L."/>
            <person name="Ye C."/>
            <person name="Zhang J."/>
            <person name="Xu J."/>
            <person name="Zhou Y."/>
            <person name="Yu Y."/>
            <person name="Zhang B."/>
            <person name="Zhuang S."/>
            <person name="Wei H."/>
            <person name="Liu B."/>
            <person name="Lei M."/>
            <person name="Yu H."/>
            <person name="Li Y."/>
            <person name="Xu H."/>
            <person name="Wei S."/>
            <person name="He X."/>
            <person name="Fang L."/>
            <person name="Zhang Z."/>
            <person name="Zhang Y."/>
            <person name="Huang X."/>
            <person name="Su Z."/>
            <person name="Tong W."/>
            <person name="Li J."/>
            <person name="Tong Z."/>
            <person name="Li S."/>
            <person name="Ye J."/>
            <person name="Wang L."/>
            <person name="Fang L."/>
            <person name="Lei T."/>
            <person name="Chen C.-S."/>
            <person name="Chen H.-C."/>
            <person name="Xu Z."/>
            <person name="Li H."/>
            <person name="Huang H."/>
            <person name="Zhang F."/>
            <person name="Xu H."/>
            <person name="Li N."/>
            <person name="Zhao C."/>
            <person name="Li S."/>
            <person name="Dong L."/>
            <person name="Huang Y."/>
            <person name="Li L."/>
            <person name="Xi Y."/>
            <person name="Qi Q."/>
            <person name="Li W."/>
            <person name="Zhang B."/>
            <person name="Hu W."/>
            <person name="Zhang Y."/>
            <person name="Tian X."/>
            <person name="Jiao Y."/>
            <person name="Liang X."/>
            <person name="Jin J."/>
            <person name="Gao L."/>
            <person name="Zheng W."/>
            <person name="Hao B."/>
            <person name="Liu S.-M."/>
            <person name="Wang W."/>
            <person name="Yuan L."/>
            <person name="Cao M."/>
            <person name="McDermott J."/>
            <person name="Samudrala R."/>
            <person name="Wang J."/>
            <person name="Wong G.K.-S."/>
            <person name="Yang H."/>
        </authorList>
    </citation>
    <scope>NUCLEOTIDE SEQUENCE [LARGE SCALE GENOMIC DNA]</scope>
    <source>
        <strain>cv. 93-11</strain>
    </source>
</reference>